<proteinExistence type="evidence at protein level"/>
<dbReference type="EMBL" id="M95288">
    <property type="protein sequence ID" value="AAA27341.1"/>
    <property type="molecule type" value="Genomic_DNA"/>
</dbReference>
<dbReference type="RefSeq" id="WP_048347957.1">
    <property type="nucleotide sequence ID" value="NZ_CP011941.1"/>
</dbReference>
<dbReference type="SMR" id="Q02180"/>
<dbReference type="STRING" id="32052.WB44_13655"/>
<dbReference type="iPTMnet" id="Q02180"/>
<dbReference type="OrthoDB" id="512145at2"/>
<dbReference type="GO" id="GO:0030089">
    <property type="term" value="C:phycobilisome"/>
    <property type="evidence" value="ECO:0007669"/>
    <property type="project" value="UniProtKB-KW"/>
</dbReference>
<dbReference type="GO" id="GO:0031676">
    <property type="term" value="C:plasma membrane-derived thylakoid membrane"/>
    <property type="evidence" value="ECO:0007669"/>
    <property type="project" value="UniProtKB-SubCell"/>
</dbReference>
<dbReference type="GO" id="GO:0015979">
    <property type="term" value="P:photosynthesis"/>
    <property type="evidence" value="ECO:0007669"/>
    <property type="project" value="UniProtKB-KW"/>
</dbReference>
<dbReference type="Gene3D" id="1.10.490.20">
    <property type="entry name" value="Phycocyanins"/>
    <property type="match status" value="1"/>
</dbReference>
<dbReference type="InterPro" id="IPR009050">
    <property type="entry name" value="Globin-like_sf"/>
</dbReference>
<dbReference type="InterPro" id="IPR012128">
    <property type="entry name" value="Phycobilisome_asu/bsu"/>
</dbReference>
<dbReference type="InterPro" id="IPR038719">
    <property type="entry name" value="Phycobilisome_asu/bsu_sf"/>
</dbReference>
<dbReference type="PANTHER" id="PTHR34011:SF7">
    <property type="entry name" value="C-PHYCOCYANIN BETA SUBUNIT"/>
    <property type="match status" value="1"/>
</dbReference>
<dbReference type="PANTHER" id="PTHR34011">
    <property type="entry name" value="PHYCOBILISOME 32.1 KDA LINKER POLYPEPTIDE, PHYCOCYANIN-ASSOCIATED, ROD 2-RELATED"/>
    <property type="match status" value="1"/>
</dbReference>
<dbReference type="Pfam" id="PF00502">
    <property type="entry name" value="Phycobilisome"/>
    <property type="match status" value="1"/>
</dbReference>
<dbReference type="PIRSF" id="PIRSF000081">
    <property type="entry name" value="Phycocyanin"/>
    <property type="match status" value="1"/>
</dbReference>
<dbReference type="SUPFAM" id="SSF46458">
    <property type="entry name" value="Globin-like"/>
    <property type="match status" value="1"/>
</dbReference>
<name>PHEB1_SYNPY</name>
<comment type="function">
    <text>Light-harvesting photosynthetic bile pigment-protein from the phycobiliprotein complex.</text>
</comment>
<comment type="subunit">
    <text>Heterodimer of an alpha and a beta chain.</text>
</comment>
<comment type="subcellular location">
    <subcellularLocation>
        <location>Cellular thylakoid membrane</location>
        <topology>Peripheral membrane protein</topology>
        <orientation>Cytoplasmic side</orientation>
    </subcellularLocation>
    <text>Forms the periphery of the phycobilisome rod.</text>
</comment>
<comment type="PTM">
    <text>Contains three covalently linked phycoerythrobilin chromophores.</text>
</comment>
<comment type="similarity">
    <text evidence="1">Belongs to the phycobiliprotein family.</text>
</comment>
<reference key="1">
    <citation type="journal article" date="1993" name="Plant Mol. Biol.">
        <title>Genes of the R-phycocyanin II locus of marine Synechococcus spp., and comparison of protein-chromophore interactions in phycocyanins differing in bilin composition.</title>
        <authorList>
            <person name="de Lorimier R."/>
            <person name="Wilbanks S.M."/>
            <person name="Glazer A.N."/>
        </authorList>
    </citation>
    <scope>NUCLEOTIDE SEQUENCE [GENOMIC DNA]</scope>
</reference>
<reference key="2">
    <citation type="journal article" date="1993" name="J. Biol. Chem.">
        <title>Rod structure of a phycoerythrin II-containing phycobilisome. I. Organization and sequence of the gene cluster encoding the major phycobiliprotein rod components in the genome of marine Synechococcus sp. WH8020.</title>
        <authorList>
            <person name="Wilbanks S.M."/>
            <person name="Glazer A.N."/>
        </authorList>
    </citation>
    <scope>NUCLEOTIDE SEQUENCE [GENOMIC DNA]</scope>
</reference>
<reference key="3">
    <citation type="journal article" date="1991" name="J. Biol. Chem.">
        <title>Phycoerythrins of marine unicellular cyanobacteria. I. Bilin types and locations and energy transfer pathways in Synechococcus spp. phycoerythrins.</title>
        <authorList>
            <person name="Ong L.J."/>
            <person name="Glazer A.N."/>
        </authorList>
    </citation>
    <scope>PARTIAL PROTEIN SEQUENCE</scope>
    <scope>CHROMOPHORE BINDING</scope>
    <scope>METHYLATION AT ASN-72</scope>
</reference>
<organism>
    <name type="scientific">Synechococcus sp. (strain WH8020)</name>
    <dbReference type="NCBI Taxonomy" id="32052"/>
    <lineage>
        <taxon>Bacteria</taxon>
        <taxon>Bacillati</taxon>
        <taxon>Cyanobacteriota</taxon>
        <taxon>Cyanophyceae</taxon>
        <taxon>Synechococcales</taxon>
        <taxon>Synechococcaceae</taxon>
        <taxon>Synechococcus</taxon>
    </lineage>
</organism>
<sequence>MLDAFSRSVVSADAKTAPVGGSDLAGLRSYVRDGNKRLDAVNAITSNASCIVSDAVTGMICENTGLIQAGGNCYPNRRMAACLRDGEIVLRYISYALLAGDASVLDDRCLNGLKETYIALGVPTQSAGRAVAIMKASATAHIGETNTPGLGGKRFRKMETTQGDCAALVAEAGAYFDRVIGAIS</sequence>
<feature type="chain" id="PRO_0000199202" description="C-phycoerythrin class 1 subunit beta">
    <location>
        <begin position="1"/>
        <end position="184"/>
    </location>
</feature>
<feature type="binding site" description="covalent">
    <location>
        <position position="50"/>
    </location>
    <ligand>
        <name>(2R,3E)-phycoerythrobilin</name>
        <dbReference type="ChEBI" id="CHEBI:85276"/>
        <label>1</label>
    </ligand>
</feature>
<feature type="binding site" description="covalent">
    <location>
        <position position="61"/>
    </location>
    <ligand>
        <name>(2R,3E)-phycoerythrobilin</name>
        <dbReference type="ChEBI" id="CHEBI:85276"/>
        <label>1</label>
    </ligand>
</feature>
<feature type="binding site" description="covalent">
    <location>
        <position position="82"/>
    </location>
    <ligand>
        <name>(2R,3E)-phycoerythrobilin</name>
        <dbReference type="ChEBI" id="CHEBI:85276"/>
        <label>2</label>
    </ligand>
</feature>
<feature type="binding site" description="covalent">
    <location>
        <position position="165"/>
    </location>
    <ligand>
        <name>(2R,3E)-phycoerythrobilin</name>
        <dbReference type="ChEBI" id="CHEBI:85276"/>
        <label>3</label>
    </ligand>
</feature>
<feature type="modified residue" description="N4-methylasparagine" evidence="2">
    <location>
        <position position="72"/>
    </location>
</feature>
<accession>Q02180</accession>
<keyword id="KW-0042">Antenna complex</keyword>
<keyword id="KW-0089">Bile pigment</keyword>
<keyword id="KW-0157">Chromophore</keyword>
<keyword id="KW-0903">Direct protein sequencing</keyword>
<keyword id="KW-0249">Electron transport</keyword>
<keyword id="KW-0472">Membrane</keyword>
<keyword id="KW-0488">Methylation</keyword>
<keyword id="KW-0602">Photosynthesis</keyword>
<keyword id="KW-0605">Phycobilisome</keyword>
<keyword id="KW-0793">Thylakoid</keyword>
<keyword id="KW-0813">Transport</keyword>
<protein>
    <recommendedName>
        <fullName>C-phycoerythrin class 1 subunit beta</fullName>
    </recommendedName>
    <alternativeName>
        <fullName>C-phycoerythrin class I beta chain</fullName>
    </alternativeName>
</protein>
<gene>
    <name type="primary">cpeB</name>
</gene>
<evidence type="ECO:0000305" key="1"/>
<evidence type="ECO:0000305" key="2">
    <source>
    </source>
</evidence>